<proteinExistence type="evidence at protein level"/>
<organism>
    <name type="scientific">Homo sapiens</name>
    <name type="common">Human</name>
    <dbReference type="NCBI Taxonomy" id="9606"/>
    <lineage>
        <taxon>Eukaryota</taxon>
        <taxon>Metazoa</taxon>
        <taxon>Chordata</taxon>
        <taxon>Craniata</taxon>
        <taxon>Vertebrata</taxon>
        <taxon>Euteleostomi</taxon>
        <taxon>Mammalia</taxon>
        <taxon>Eutheria</taxon>
        <taxon>Euarchontoglires</taxon>
        <taxon>Primates</taxon>
        <taxon>Haplorrhini</taxon>
        <taxon>Catarrhini</taxon>
        <taxon>Hominidae</taxon>
        <taxon>Homo</taxon>
    </lineage>
</organism>
<protein>
    <recommendedName>
        <fullName>Pleckstrin homology domain-containing family A member 1</fullName>
        <shortName>PH domain-containing family A member 1</shortName>
    </recommendedName>
    <alternativeName>
        <fullName>Tandem PH domain-containing protein 1</fullName>
        <shortName>TAPP-1</shortName>
    </alternativeName>
</protein>
<gene>
    <name type="primary">PLEKHA1</name>
    <name type="synonym">TAPP1</name>
</gene>
<sequence length="404" mass="45553">MPYVDRQNRICGFLDIEENENSGKFLRRYFILDTREDSFVWYMDNPQNLPSGSSRVGAIKLTYISKVSDATKLRPKAEFCFVMNAGMRKYFLQANDQQDLVEWVNVLNKAIKITVPKQSDSQPNSDNLSRHGECGKKQVSYRTDIVGGVPIITPTQKEEVNECGESIDRNNLKRSQSHLPYFTPKPPQDSAVIKAGYCVKQGAVMKNWKRRYFQLDENTIGYFKSELEKEPLRVIPLKEVHKVQECKQSDIMMRDNLFEIVTTSRTFYVQADSPEEMHSWIKAVSGAIVAQRGPGRSASSEHPPGPSESKHAFRPTNAATATSHSTASRSNSLVSTFTMEKRGFYESLAKVKPGNFKVQTVSPREPASKVTEQALLRPQSKNGPQEKDCDLVDLDDASLPVSDV</sequence>
<comment type="function">
    <text evidence="3 4 7">Binds specifically to phosphatidylinositol 3,4-diphosphate (PtdIns3,4P2), but not to other phosphoinositides. May recruit other proteins to the plasma membrane.</text>
</comment>
<comment type="subunit">
    <text evidence="5 7">Interacts with MPDZ and PTPN13.</text>
</comment>
<comment type="interaction">
    <interactant intactId="EBI-2652984">
        <id>Q9HB21</id>
    </interactant>
    <interactant intactId="EBI-821405">
        <id>O75970</id>
        <label>MPDZ</label>
    </interactant>
    <organismsDiffer>false</organismsDiffer>
    <experiments>6</experiments>
</comment>
<comment type="interaction">
    <interactant intactId="EBI-2652984">
        <id>Q9HB21</id>
    </interactant>
    <interactant intactId="EBI-1049513">
        <id>Q9P0V3</id>
        <label>SH3BP4</label>
    </interactant>
    <organismsDiffer>false</organismsDiffer>
    <experiments>2</experiments>
</comment>
<comment type="subcellular location">
    <subcellularLocation>
        <location evidence="5 6">Cytoplasm</location>
    </subcellularLocation>
    <subcellularLocation>
        <location evidence="5 6">Cell membrane</location>
        <topology>Peripheral membrane protein</topology>
    </subcellularLocation>
    <subcellularLocation>
        <location evidence="5 6">Nucleus</location>
    </subcellularLocation>
    <text evidence="5">Locates to the plasma membrane after treatments that stimulate the production of PtdIns3,4P2.</text>
</comment>
<comment type="alternative products">
    <event type="alternative splicing"/>
    <isoform>
        <id>Q9HB21-1</id>
        <name>1</name>
        <sequence type="displayed"/>
    </isoform>
    <isoform>
        <id>Q9HB21-2</id>
        <name>2</name>
        <sequence type="described" ref="VSP_043091"/>
    </isoform>
</comment>
<comment type="tissue specificity">
    <text evidence="3 6">Highly expressed in skeletal muscle, thymus, pancreas, placenta and lung. Detected at low levels in brain, heart, peripheral blood leukocytes, testis, ovary, spinal cord, thyroid, kidney, liver, small intestine and colon.</text>
</comment>
<comment type="domain">
    <text>Binds to membranes enriched in PtdIns3,4P2 via the C-terminal PH domain.</text>
</comment>
<dbReference type="EMBL" id="AF286160">
    <property type="protein sequence ID" value="AAG15197.1"/>
    <property type="molecule type" value="mRNA"/>
</dbReference>
<dbReference type="EMBL" id="AK057463">
    <property type="protein sequence ID" value="BAG51917.1"/>
    <property type="molecule type" value="mRNA"/>
</dbReference>
<dbReference type="EMBL" id="BX664700">
    <property type="status" value="NOT_ANNOTATED_CDS"/>
    <property type="molecule type" value="Genomic_DNA"/>
</dbReference>
<dbReference type="EMBL" id="BX842242">
    <property type="status" value="NOT_ANNOTATED_CDS"/>
    <property type="molecule type" value="Genomic_DNA"/>
</dbReference>
<dbReference type="EMBL" id="CH471066">
    <property type="protein sequence ID" value="EAW49315.1"/>
    <property type="molecule type" value="Genomic_DNA"/>
</dbReference>
<dbReference type="EMBL" id="CH471066">
    <property type="protein sequence ID" value="EAW49316.1"/>
    <property type="molecule type" value="Genomic_DNA"/>
</dbReference>
<dbReference type="EMBL" id="CH471066">
    <property type="protein sequence ID" value="EAW49318.1"/>
    <property type="molecule type" value="Genomic_DNA"/>
</dbReference>
<dbReference type="EMBL" id="CH471066">
    <property type="protein sequence ID" value="EAW49319.1"/>
    <property type="molecule type" value="Genomic_DNA"/>
</dbReference>
<dbReference type="EMBL" id="BC001136">
    <property type="protein sequence ID" value="AAH01136.1"/>
    <property type="molecule type" value="mRNA"/>
</dbReference>
<dbReference type="EMBL" id="BC042458">
    <property type="protein sequence ID" value="AAH42458.1"/>
    <property type="molecule type" value="mRNA"/>
</dbReference>
<dbReference type="CCDS" id="CCDS55730.1">
    <molecule id="Q9HB21-2"/>
</dbReference>
<dbReference type="CCDS" id="CCDS7629.1">
    <molecule id="Q9HB21-1"/>
</dbReference>
<dbReference type="RefSeq" id="NP_001001974.1">
    <molecule id="Q9HB21-1"/>
    <property type="nucleotide sequence ID" value="NM_001001974.4"/>
</dbReference>
<dbReference type="RefSeq" id="NP_001182537.1">
    <molecule id="Q9HB21-2"/>
    <property type="nucleotide sequence ID" value="NM_001195608.2"/>
</dbReference>
<dbReference type="RefSeq" id="NP_001317107.1">
    <property type="nucleotide sequence ID" value="NM_001330178.1"/>
</dbReference>
<dbReference type="RefSeq" id="NP_001364159.1">
    <molecule id="Q9HB21-1"/>
    <property type="nucleotide sequence ID" value="NM_001377230.1"/>
</dbReference>
<dbReference type="RefSeq" id="NP_001364160.1">
    <molecule id="Q9HB21-1"/>
    <property type="nucleotide sequence ID" value="NM_001377231.1"/>
</dbReference>
<dbReference type="RefSeq" id="NP_001364161.1">
    <molecule id="Q9HB21-1"/>
    <property type="nucleotide sequence ID" value="NM_001377232.1"/>
</dbReference>
<dbReference type="RefSeq" id="NP_001364163.1">
    <molecule id="Q9HB21-1"/>
    <property type="nucleotide sequence ID" value="NM_001377234.1"/>
</dbReference>
<dbReference type="RefSeq" id="NP_001364164.1">
    <molecule id="Q9HB21-1"/>
    <property type="nucleotide sequence ID" value="NM_001377235.1"/>
</dbReference>
<dbReference type="RefSeq" id="NP_001364166.1">
    <molecule id="Q9HB21-2"/>
    <property type="nucleotide sequence ID" value="NM_001377237.1"/>
</dbReference>
<dbReference type="RefSeq" id="NP_001364167.1">
    <molecule id="Q9HB21-2"/>
    <property type="nucleotide sequence ID" value="NM_001377238.1"/>
</dbReference>
<dbReference type="RefSeq" id="NP_067635.2">
    <molecule id="Q9HB21-1"/>
    <property type="nucleotide sequence ID" value="NM_021622.4"/>
</dbReference>
<dbReference type="RefSeq" id="XP_005270073.1">
    <property type="nucleotide sequence ID" value="XM_005270016.1"/>
</dbReference>
<dbReference type="RefSeq" id="XP_005270078.1">
    <property type="nucleotide sequence ID" value="XM_005270021.4"/>
</dbReference>
<dbReference type="RefSeq" id="XP_016871969.1">
    <property type="nucleotide sequence ID" value="XM_017016480.1"/>
</dbReference>
<dbReference type="RefSeq" id="XP_016871970.1">
    <property type="nucleotide sequence ID" value="XM_017016481.1"/>
</dbReference>
<dbReference type="RefSeq" id="XP_016871971.1">
    <molecule id="Q9HB21-1"/>
    <property type="nucleotide sequence ID" value="XM_017016482.2"/>
</dbReference>
<dbReference type="RefSeq" id="XP_016871979.1">
    <property type="nucleotide sequence ID" value="XM_017016490.1"/>
</dbReference>
<dbReference type="RefSeq" id="XP_016871980.1">
    <property type="nucleotide sequence ID" value="XM_017016491.1"/>
</dbReference>
<dbReference type="RefSeq" id="XP_024303881.1">
    <molecule id="Q9HB21-1"/>
    <property type="nucleotide sequence ID" value="XM_024448113.2"/>
</dbReference>
<dbReference type="RefSeq" id="XP_024303882.1">
    <molecule id="Q9HB21-1"/>
    <property type="nucleotide sequence ID" value="XM_024448114.2"/>
</dbReference>
<dbReference type="RefSeq" id="XP_047281559.1">
    <molecule id="Q9HB21-1"/>
    <property type="nucleotide sequence ID" value="XM_047425603.1"/>
</dbReference>
<dbReference type="RefSeq" id="XP_047281560.1">
    <molecule id="Q9HB21-1"/>
    <property type="nucleotide sequence ID" value="XM_047425604.1"/>
</dbReference>
<dbReference type="RefSeq" id="XP_047281561.1">
    <molecule id="Q9HB21-1"/>
    <property type="nucleotide sequence ID" value="XM_047425605.1"/>
</dbReference>
<dbReference type="RefSeq" id="XP_047281562.1">
    <molecule id="Q9HB21-1"/>
    <property type="nucleotide sequence ID" value="XM_047425606.1"/>
</dbReference>
<dbReference type="PDB" id="1EAZ">
    <property type="method" value="X-ray"/>
    <property type="resolution" value="1.40 A"/>
    <property type="chains" value="A=182-303"/>
</dbReference>
<dbReference type="PDBsum" id="1EAZ"/>
<dbReference type="SMR" id="Q9HB21"/>
<dbReference type="BioGRID" id="121880">
    <property type="interactions" value="113"/>
</dbReference>
<dbReference type="FunCoup" id="Q9HB21">
    <property type="interactions" value="1629"/>
</dbReference>
<dbReference type="IntAct" id="Q9HB21">
    <property type="interactions" value="49"/>
</dbReference>
<dbReference type="MINT" id="Q9HB21"/>
<dbReference type="STRING" id="9606.ENSP00000357986"/>
<dbReference type="ChEMBL" id="CHEMBL3763005"/>
<dbReference type="DrugBank" id="DB04272">
    <property type="generic name" value="Citric acid"/>
</dbReference>
<dbReference type="GlyCosmos" id="Q9HB21">
    <property type="glycosylation" value="5 sites, 2 glycans"/>
</dbReference>
<dbReference type="GlyGen" id="Q9HB21">
    <property type="glycosylation" value="6 sites, 2 O-linked glycans (6 sites)"/>
</dbReference>
<dbReference type="iPTMnet" id="Q9HB21"/>
<dbReference type="PhosphoSitePlus" id="Q9HB21"/>
<dbReference type="SwissPalm" id="Q9HB21"/>
<dbReference type="BioMuta" id="PLEKHA1"/>
<dbReference type="DMDM" id="48474647"/>
<dbReference type="jPOST" id="Q9HB21"/>
<dbReference type="MassIVE" id="Q9HB21"/>
<dbReference type="PaxDb" id="9606-ENSP00000357986"/>
<dbReference type="PeptideAtlas" id="Q9HB21"/>
<dbReference type="ProteomicsDB" id="81474">
    <molecule id="Q9HB21-1"/>
</dbReference>
<dbReference type="ProteomicsDB" id="81475">
    <molecule id="Q9HB21-2"/>
</dbReference>
<dbReference type="Pumba" id="Q9HB21"/>
<dbReference type="Antibodypedia" id="1178">
    <property type="antibodies" value="184 antibodies from 28 providers"/>
</dbReference>
<dbReference type="DNASU" id="59338"/>
<dbReference type="Ensembl" id="ENST00000368988.5">
    <molecule id="Q9HB21-2"/>
    <property type="protein sequence ID" value="ENSP00000357984.2"/>
    <property type="gene ID" value="ENSG00000107679.15"/>
</dbReference>
<dbReference type="Ensembl" id="ENST00000368990.8">
    <molecule id="Q9HB21-1"/>
    <property type="protein sequence ID" value="ENSP00000357986.3"/>
    <property type="gene ID" value="ENSG00000107679.15"/>
</dbReference>
<dbReference type="Ensembl" id="ENST00000392799.7">
    <molecule id="Q9HB21-1"/>
    <property type="protein sequence ID" value="ENSP00000376547.3"/>
    <property type="gene ID" value="ENSG00000107679.15"/>
</dbReference>
<dbReference type="Ensembl" id="ENST00000433307.2">
    <molecule id="Q9HB21-1"/>
    <property type="protein sequence ID" value="ENSP00000394416.1"/>
    <property type="gene ID" value="ENSG00000107679.15"/>
</dbReference>
<dbReference type="GeneID" id="59338"/>
<dbReference type="KEGG" id="hsa:59338"/>
<dbReference type="MANE-Select" id="ENST00000368990.8">
    <property type="protein sequence ID" value="ENSP00000357986.3"/>
    <property type="RefSeq nucleotide sequence ID" value="NM_001001974.4"/>
    <property type="RefSeq protein sequence ID" value="NP_001001974.1"/>
</dbReference>
<dbReference type="UCSC" id="uc001lge.3">
    <molecule id="Q9HB21-1"/>
    <property type="organism name" value="human"/>
</dbReference>
<dbReference type="AGR" id="HGNC:14335"/>
<dbReference type="CTD" id="59338"/>
<dbReference type="DisGeNET" id="59338"/>
<dbReference type="GeneCards" id="PLEKHA1"/>
<dbReference type="HGNC" id="HGNC:14335">
    <property type="gene designation" value="PLEKHA1"/>
</dbReference>
<dbReference type="HPA" id="ENSG00000107679">
    <property type="expression patterns" value="Low tissue specificity"/>
</dbReference>
<dbReference type="MalaCards" id="PLEKHA1"/>
<dbReference type="MIM" id="607772">
    <property type="type" value="gene"/>
</dbReference>
<dbReference type="neXtProt" id="NX_Q9HB21"/>
<dbReference type="NIAGADS" id="ENSG00000107679"/>
<dbReference type="OpenTargets" id="ENSG00000107679"/>
<dbReference type="PharmGKB" id="PA33401"/>
<dbReference type="VEuPathDB" id="HostDB:ENSG00000107679"/>
<dbReference type="eggNOG" id="ENOG502QT2K">
    <property type="taxonomic scope" value="Eukaryota"/>
</dbReference>
<dbReference type="GeneTree" id="ENSGT00940000155157"/>
<dbReference type="HOGENOM" id="CLU_055135_2_0_1"/>
<dbReference type="InParanoid" id="Q9HB21"/>
<dbReference type="OMA" id="DPKHAFR"/>
<dbReference type="OrthoDB" id="185175at2759"/>
<dbReference type="PAN-GO" id="Q9HB21">
    <property type="GO annotations" value="3 GO annotations based on evolutionary models"/>
</dbReference>
<dbReference type="PhylomeDB" id="Q9HB21"/>
<dbReference type="TreeFam" id="TF329516"/>
<dbReference type="PathwayCommons" id="Q9HB21"/>
<dbReference type="Reactome" id="R-HSA-1660499">
    <property type="pathway name" value="Synthesis of PIPs at the plasma membrane"/>
</dbReference>
<dbReference type="SignaLink" id="Q9HB21"/>
<dbReference type="BioGRID-ORCS" id="59338">
    <property type="hits" value="17 hits in 1158 CRISPR screens"/>
</dbReference>
<dbReference type="CD-CODE" id="FB4E32DD">
    <property type="entry name" value="Presynaptic clusters and postsynaptic densities"/>
</dbReference>
<dbReference type="ChiTaRS" id="PLEKHA1">
    <property type="organism name" value="human"/>
</dbReference>
<dbReference type="EvolutionaryTrace" id="Q9HB21"/>
<dbReference type="GeneWiki" id="PLEKHA1"/>
<dbReference type="GenomeRNAi" id="59338"/>
<dbReference type="Pharos" id="Q9HB21">
    <property type="development level" value="Tbio"/>
</dbReference>
<dbReference type="PRO" id="PR:Q9HB21"/>
<dbReference type="Proteomes" id="UP000005640">
    <property type="component" value="Chromosome 10"/>
</dbReference>
<dbReference type="RNAct" id="Q9HB21">
    <property type="molecule type" value="protein"/>
</dbReference>
<dbReference type="Bgee" id="ENSG00000107679">
    <property type="expression patterns" value="Expressed in upper leg skin and 199 other cell types or tissues"/>
</dbReference>
<dbReference type="ExpressionAtlas" id="Q9HB21">
    <property type="expression patterns" value="baseline and differential"/>
</dbReference>
<dbReference type="GO" id="GO:0005737">
    <property type="term" value="C:cytoplasm"/>
    <property type="evidence" value="ECO:0000314"/>
    <property type="project" value="UniProtKB"/>
</dbReference>
<dbReference type="GO" id="GO:0005829">
    <property type="term" value="C:cytosol"/>
    <property type="evidence" value="ECO:0000314"/>
    <property type="project" value="HPA"/>
</dbReference>
<dbReference type="GO" id="GO:0070062">
    <property type="term" value="C:extracellular exosome"/>
    <property type="evidence" value="ECO:0007005"/>
    <property type="project" value="UniProtKB"/>
</dbReference>
<dbReference type="GO" id="GO:0005654">
    <property type="term" value="C:nucleoplasm"/>
    <property type="evidence" value="ECO:0000314"/>
    <property type="project" value="HPA"/>
</dbReference>
<dbReference type="GO" id="GO:0005886">
    <property type="term" value="C:plasma membrane"/>
    <property type="evidence" value="ECO:0000314"/>
    <property type="project" value="UniProtKB"/>
</dbReference>
<dbReference type="GO" id="GO:0032587">
    <property type="term" value="C:ruffle membrane"/>
    <property type="evidence" value="ECO:0000314"/>
    <property type="project" value="UniProtKB"/>
</dbReference>
<dbReference type="GO" id="GO:0030165">
    <property type="term" value="F:PDZ domain binding"/>
    <property type="evidence" value="ECO:0000353"/>
    <property type="project" value="UniProtKB"/>
</dbReference>
<dbReference type="GO" id="GO:0043325">
    <property type="term" value="F:phosphatidylinositol-3,4-bisphosphate binding"/>
    <property type="evidence" value="ECO:0000314"/>
    <property type="project" value="UniProtKB"/>
</dbReference>
<dbReference type="GO" id="GO:0005543">
    <property type="term" value="F:phospholipid binding"/>
    <property type="evidence" value="ECO:0000318"/>
    <property type="project" value="GO_Central"/>
</dbReference>
<dbReference type="GO" id="GO:0008209">
    <property type="term" value="P:androgen metabolic process"/>
    <property type="evidence" value="ECO:0007669"/>
    <property type="project" value="Ensembl"/>
</dbReference>
<dbReference type="GO" id="GO:0050853">
    <property type="term" value="P:B cell receptor signaling pathway"/>
    <property type="evidence" value="ECO:0000314"/>
    <property type="project" value="UniProtKB"/>
</dbReference>
<dbReference type="GO" id="GO:0070301">
    <property type="term" value="P:cellular response to hydrogen peroxide"/>
    <property type="evidence" value="ECO:0000314"/>
    <property type="project" value="UniProtKB"/>
</dbReference>
<dbReference type="GO" id="GO:0045184">
    <property type="term" value="P:establishment of protein localization"/>
    <property type="evidence" value="ECO:0000314"/>
    <property type="project" value="UniProtKB"/>
</dbReference>
<dbReference type="GO" id="GO:0008210">
    <property type="term" value="P:estrogen metabolic process"/>
    <property type="evidence" value="ECO:0007669"/>
    <property type="project" value="Ensembl"/>
</dbReference>
<dbReference type="GO" id="GO:0060325">
    <property type="term" value="P:face morphogenesis"/>
    <property type="evidence" value="ECO:0007669"/>
    <property type="project" value="Ensembl"/>
</dbReference>
<dbReference type="GO" id="GO:0033327">
    <property type="term" value="P:Leydig cell differentiation"/>
    <property type="evidence" value="ECO:0007669"/>
    <property type="project" value="Ensembl"/>
</dbReference>
<dbReference type="GO" id="GO:0001553">
    <property type="term" value="P:luteinization"/>
    <property type="evidence" value="ECO:0007669"/>
    <property type="project" value="Ensembl"/>
</dbReference>
<dbReference type="GO" id="GO:0035264">
    <property type="term" value="P:multicellular organism growth"/>
    <property type="evidence" value="ECO:0007669"/>
    <property type="project" value="Ensembl"/>
</dbReference>
<dbReference type="GO" id="GO:0051898">
    <property type="term" value="P:negative regulation of phosphatidylinositol 3-kinase/protein kinase B signal transduction"/>
    <property type="evidence" value="ECO:0000315"/>
    <property type="project" value="UniProtKB"/>
</dbReference>
<dbReference type="GO" id="GO:0043491">
    <property type="term" value="P:phosphatidylinositol 3-kinase/protein kinase B signal transduction"/>
    <property type="evidence" value="ECO:0000314"/>
    <property type="project" value="UniProtKB"/>
</dbReference>
<dbReference type="GO" id="GO:0048008">
    <property type="term" value="P:platelet-derived growth factor receptor signaling pathway"/>
    <property type="evidence" value="ECO:0007669"/>
    <property type="project" value="Ensembl"/>
</dbReference>
<dbReference type="GO" id="GO:0009791">
    <property type="term" value="P:post-embryonic development"/>
    <property type="evidence" value="ECO:0007669"/>
    <property type="project" value="Ensembl"/>
</dbReference>
<dbReference type="GO" id="GO:0060021">
    <property type="term" value="P:roof of mouth development"/>
    <property type="evidence" value="ECO:0007669"/>
    <property type="project" value="Ensembl"/>
</dbReference>
<dbReference type="GO" id="GO:0031529">
    <property type="term" value="P:ruffle organization"/>
    <property type="evidence" value="ECO:0000314"/>
    <property type="project" value="UniProtKB"/>
</dbReference>
<dbReference type="GO" id="GO:0048705">
    <property type="term" value="P:skeletal system morphogenesis"/>
    <property type="evidence" value="ECO:0007669"/>
    <property type="project" value="Ensembl"/>
</dbReference>
<dbReference type="GO" id="GO:0007283">
    <property type="term" value="P:spermatogenesis"/>
    <property type="evidence" value="ECO:0007669"/>
    <property type="project" value="Ensembl"/>
</dbReference>
<dbReference type="CDD" id="cd13270">
    <property type="entry name" value="PH1_TAPP1_2"/>
    <property type="match status" value="1"/>
</dbReference>
<dbReference type="CDD" id="cd13271">
    <property type="entry name" value="PH2_TAPP1_2"/>
    <property type="match status" value="1"/>
</dbReference>
<dbReference type="FunFam" id="2.30.29.30:FF:000049">
    <property type="entry name" value="pleckstrin homology domain-containing family A member 1 isoform X1"/>
    <property type="match status" value="1"/>
</dbReference>
<dbReference type="FunFam" id="2.30.29.30:FF:000042">
    <property type="entry name" value="pleckstrin homology domain-containing family A member 1 isoform X2"/>
    <property type="match status" value="1"/>
</dbReference>
<dbReference type="Gene3D" id="2.30.29.30">
    <property type="entry name" value="Pleckstrin-homology domain (PH domain)/Phosphotyrosine-binding domain (PTB)"/>
    <property type="match status" value="2"/>
</dbReference>
<dbReference type="InterPro" id="IPR011993">
    <property type="entry name" value="PH-like_dom_sf"/>
</dbReference>
<dbReference type="InterPro" id="IPR001849">
    <property type="entry name" value="PH_domain"/>
</dbReference>
<dbReference type="InterPro" id="IPR051707">
    <property type="entry name" value="PI-Interact_SigTrans_Reg"/>
</dbReference>
<dbReference type="PANTHER" id="PTHR14336:SF4">
    <property type="entry name" value="PLECKSTRIN HOMOLOGY DOMAIN-CONTAINING FAMILY A MEMBER 1"/>
    <property type="match status" value="1"/>
</dbReference>
<dbReference type="PANTHER" id="PTHR14336">
    <property type="entry name" value="TANDEM PH DOMAIN CONTAINING PROTEIN"/>
    <property type="match status" value="1"/>
</dbReference>
<dbReference type="Pfam" id="PF00169">
    <property type="entry name" value="PH"/>
    <property type="match status" value="2"/>
</dbReference>
<dbReference type="SMART" id="SM00233">
    <property type="entry name" value="PH"/>
    <property type="match status" value="2"/>
</dbReference>
<dbReference type="SUPFAM" id="SSF50729">
    <property type="entry name" value="PH domain-like"/>
    <property type="match status" value="2"/>
</dbReference>
<dbReference type="PROSITE" id="PS50003">
    <property type="entry name" value="PH_DOMAIN"/>
    <property type="match status" value="2"/>
</dbReference>
<evidence type="ECO:0000255" key="1">
    <source>
        <dbReference type="PROSITE-ProRule" id="PRU00145"/>
    </source>
</evidence>
<evidence type="ECO:0000256" key="2">
    <source>
        <dbReference type="SAM" id="MobiDB-lite"/>
    </source>
</evidence>
<evidence type="ECO:0000269" key="3">
    <source>
    </source>
</evidence>
<evidence type="ECO:0000269" key="4">
    <source>
    </source>
</evidence>
<evidence type="ECO:0000269" key="5">
    <source>
    </source>
</evidence>
<evidence type="ECO:0000269" key="6">
    <source>
    </source>
</evidence>
<evidence type="ECO:0000269" key="7">
    <source>
    </source>
</evidence>
<evidence type="ECO:0000269" key="8">
    <source ref="4"/>
</evidence>
<evidence type="ECO:0000303" key="9">
    <source>
    </source>
</evidence>
<evidence type="ECO:0007744" key="10">
    <source>
    </source>
</evidence>
<evidence type="ECO:0007744" key="11">
    <source>
    </source>
</evidence>
<evidence type="ECO:0007829" key="12">
    <source>
        <dbReference type="PDB" id="1EAZ"/>
    </source>
</evidence>
<accession>Q9HB21</accession>
<accession>B3KQ55</accession>
<accession>D3DRE2</accession>
<accession>Q9BVK0</accession>
<reference key="1">
    <citation type="journal article" date="2000" name="Biochem. J.">
        <title>Identification of pleckstrin-homology-domain-containing proteins with novel phosphoinositide-binding specificities.</title>
        <authorList>
            <person name="Dowler S.J."/>
            <person name="Currie R.A."/>
            <person name="Campbell D.G."/>
            <person name="Deak M."/>
            <person name="Kular G."/>
            <person name="Downes C.P."/>
            <person name="Alessi D.R."/>
        </authorList>
    </citation>
    <scope>NUCLEOTIDE SEQUENCE [MRNA] (ISOFORM 1)</scope>
    <scope>FUNCTION</scope>
    <scope>MUTAGENESIS OF ARG-28 AND ARG-211</scope>
    <scope>TISSUE SPECIFICITY</scope>
    <scope>VARIANT ALA-320</scope>
</reference>
<reference key="2">
    <citation type="journal article" date="2004" name="Nat. Genet.">
        <title>Complete sequencing and characterization of 21,243 full-length human cDNAs.</title>
        <authorList>
            <person name="Ota T."/>
            <person name="Suzuki Y."/>
            <person name="Nishikawa T."/>
            <person name="Otsuki T."/>
            <person name="Sugiyama T."/>
            <person name="Irie R."/>
            <person name="Wakamatsu A."/>
            <person name="Hayashi K."/>
            <person name="Sato H."/>
            <person name="Nagai K."/>
            <person name="Kimura K."/>
            <person name="Makita H."/>
            <person name="Sekine M."/>
            <person name="Obayashi M."/>
            <person name="Nishi T."/>
            <person name="Shibahara T."/>
            <person name="Tanaka T."/>
            <person name="Ishii S."/>
            <person name="Yamamoto J."/>
            <person name="Saito K."/>
            <person name="Kawai Y."/>
            <person name="Isono Y."/>
            <person name="Nakamura Y."/>
            <person name="Nagahari K."/>
            <person name="Murakami K."/>
            <person name="Yasuda T."/>
            <person name="Iwayanagi T."/>
            <person name="Wagatsuma M."/>
            <person name="Shiratori A."/>
            <person name="Sudo H."/>
            <person name="Hosoiri T."/>
            <person name="Kaku Y."/>
            <person name="Kodaira H."/>
            <person name="Kondo H."/>
            <person name="Sugawara M."/>
            <person name="Takahashi M."/>
            <person name="Kanda K."/>
            <person name="Yokoi T."/>
            <person name="Furuya T."/>
            <person name="Kikkawa E."/>
            <person name="Omura Y."/>
            <person name="Abe K."/>
            <person name="Kamihara K."/>
            <person name="Katsuta N."/>
            <person name="Sato K."/>
            <person name="Tanikawa M."/>
            <person name="Yamazaki M."/>
            <person name="Ninomiya K."/>
            <person name="Ishibashi T."/>
            <person name="Yamashita H."/>
            <person name="Murakawa K."/>
            <person name="Fujimori K."/>
            <person name="Tanai H."/>
            <person name="Kimata M."/>
            <person name="Watanabe M."/>
            <person name="Hiraoka S."/>
            <person name="Chiba Y."/>
            <person name="Ishida S."/>
            <person name="Ono Y."/>
            <person name="Takiguchi S."/>
            <person name="Watanabe S."/>
            <person name="Yosida M."/>
            <person name="Hotuta T."/>
            <person name="Kusano J."/>
            <person name="Kanehori K."/>
            <person name="Takahashi-Fujii A."/>
            <person name="Hara H."/>
            <person name="Tanase T.-O."/>
            <person name="Nomura Y."/>
            <person name="Togiya S."/>
            <person name="Komai F."/>
            <person name="Hara R."/>
            <person name="Takeuchi K."/>
            <person name="Arita M."/>
            <person name="Imose N."/>
            <person name="Musashino K."/>
            <person name="Yuuki H."/>
            <person name="Oshima A."/>
            <person name="Sasaki N."/>
            <person name="Aotsuka S."/>
            <person name="Yoshikawa Y."/>
            <person name="Matsunawa H."/>
            <person name="Ichihara T."/>
            <person name="Shiohata N."/>
            <person name="Sano S."/>
            <person name="Moriya S."/>
            <person name="Momiyama H."/>
            <person name="Satoh N."/>
            <person name="Takami S."/>
            <person name="Terashima Y."/>
            <person name="Suzuki O."/>
            <person name="Nakagawa S."/>
            <person name="Senoh A."/>
            <person name="Mizoguchi H."/>
            <person name="Goto Y."/>
            <person name="Shimizu F."/>
            <person name="Wakebe H."/>
            <person name="Hishigaki H."/>
            <person name="Watanabe T."/>
            <person name="Sugiyama A."/>
            <person name="Takemoto M."/>
            <person name="Kawakami B."/>
            <person name="Yamazaki M."/>
            <person name="Watanabe K."/>
            <person name="Kumagai A."/>
            <person name="Itakura S."/>
            <person name="Fukuzumi Y."/>
            <person name="Fujimori Y."/>
            <person name="Komiyama M."/>
            <person name="Tashiro H."/>
            <person name="Tanigami A."/>
            <person name="Fujiwara T."/>
            <person name="Ono T."/>
            <person name="Yamada K."/>
            <person name="Fujii Y."/>
            <person name="Ozaki K."/>
            <person name="Hirao M."/>
            <person name="Ohmori Y."/>
            <person name="Kawabata A."/>
            <person name="Hikiji T."/>
            <person name="Kobatake N."/>
            <person name="Inagaki H."/>
            <person name="Ikema Y."/>
            <person name="Okamoto S."/>
            <person name="Okitani R."/>
            <person name="Kawakami T."/>
            <person name="Noguchi S."/>
            <person name="Itoh T."/>
            <person name="Shigeta K."/>
            <person name="Senba T."/>
            <person name="Matsumura K."/>
            <person name="Nakajima Y."/>
            <person name="Mizuno T."/>
            <person name="Morinaga M."/>
            <person name="Sasaki M."/>
            <person name="Togashi T."/>
            <person name="Oyama M."/>
            <person name="Hata H."/>
            <person name="Watanabe M."/>
            <person name="Komatsu T."/>
            <person name="Mizushima-Sugano J."/>
            <person name="Satoh T."/>
            <person name="Shirai Y."/>
            <person name="Takahashi Y."/>
            <person name="Nakagawa K."/>
            <person name="Okumura K."/>
            <person name="Nagase T."/>
            <person name="Nomura N."/>
            <person name="Kikuchi H."/>
            <person name="Masuho Y."/>
            <person name="Yamashita R."/>
            <person name="Nakai K."/>
            <person name="Yada T."/>
            <person name="Nakamura Y."/>
            <person name="Ohara O."/>
            <person name="Isogai T."/>
            <person name="Sugano S."/>
        </authorList>
    </citation>
    <scope>NUCLEOTIDE SEQUENCE [LARGE SCALE MRNA] (ISOFORM 2)</scope>
    <source>
        <tissue>Testis</tissue>
    </source>
</reference>
<reference key="3">
    <citation type="journal article" date="2004" name="Nature">
        <title>The DNA sequence and comparative analysis of human chromosome 10.</title>
        <authorList>
            <person name="Deloukas P."/>
            <person name="Earthrowl M.E."/>
            <person name="Grafham D.V."/>
            <person name="Rubenfield M."/>
            <person name="French L."/>
            <person name="Steward C.A."/>
            <person name="Sims S.K."/>
            <person name="Jones M.C."/>
            <person name="Searle S."/>
            <person name="Scott C."/>
            <person name="Howe K."/>
            <person name="Hunt S.E."/>
            <person name="Andrews T.D."/>
            <person name="Gilbert J.G.R."/>
            <person name="Swarbreck D."/>
            <person name="Ashurst J.L."/>
            <person name="Taylor A."/>
            <person name="Battles J."/>
            <person name="Bird C.P."/>
            <person name="Ainscough R."/>
            <person name="Almeida J.P."/>
            <person name="Ashwell R.I.S."/>
            <person name="Ambrose K.D."/>
            <person name="Babbage A.K."/>
            <person name="Bagguley C.L."/>
            <person name="Bailey J."/>
            <person name="Banerjee R."/>
            <person name="Bates K."/>
            <person name="Beasley H."/>
            <person name="Bray-Allen S."/>
            <person name="Brown A.J."/>
            <person name="Brown J.Y."/>
            <person name="Burford D.C."/>
            <person name="Burrill W."/>
            <person name="Burton J."/>
            <person name="Cahill P."/>
            <person name="Camire D."/>
            <person name="Carter N.P."/>
            <person name="Chapman J.C."/>
            <person name="Clark S.Y."/>
            <person name="Clarke G."/>
            <person name="Clee C.M."/>
            <person name="Clegg S."/>
            <person name="Corby N."/>
            <person name="Coulson A."/>
            <person name="Dhami P."/>
            <person name="Dutta I."/>
            <person name="Dunn M."/>
            <person name="Faulkner L."/>
            <person name="Frankish A."/>
            <person name="Frankland J.A."/>
            <person name="Garner P."/>
            <person name="Garnett J."/>
            <person name="Gribble S."/>
            <person name="Griffiths C."/>
            <person name="Grocock R."/>
            <person name="Gustafson E."/>
            <person name="Hammond S."/>
            <person name="Harley J.L."/>
            <person name="Hart E."/>
            <person name="Heath P.D."/>
            <person name="Ho T.P."/>
            <person name="Hopkins B."/>
            <person name="Horne J."/>
            <person name="Howden P.J."/>
            <person name="Huckle E."/>
            <person name="Hynds C."/>
            <person name="Johnson C."/>
            <person name="Johnson D."/>
            <person name="Kana A."/>
            <person name="Kay M."/>
            <person name="Kimberley A.M."/>
            <person name="Kershaw J.K."/>
            <person name="Kokkinaki M."/>
            <person name="Laird G.K."/>
            <person name="Lawlor S."/>
            <person name="Lee H.M."/>
            <person name="Leongamornlert D.A."/>
            <person name="Laird G."/>
            <person name="Lloyd C."/>
            <person name="Lloyd D.M."/>
            <person name="Loveland J."/>
            <person name="Lovell J."/>
            <person name="McLaren S."/>
            <person name="McLay K.E."/>
            <person name="McMurray A."/>
            <person name="Mashreghi-Mohammadi M."/>
            <person name="Matthews L."/>
            <person name="Milne S."/>
            <person name="Nickerson T."/>
            <person name="Nguyen M."/>
            <person name="Overton-Larty E."/>
            <person name="Palmer S.A."/>
            <person name="Pearce A.V."/>
            <person name="Peck A.I."/>
            <person name="Pelan S."/>
            <person name="Phillimore B."/>
            <person name="Porter K."/>
            <person name="Rice C.M."/>
            <person name="Rogosin A."/>
            <person name="Ross M.T."/>
            <person name="Sarafidou T."/>
            <person name="Sehra H.K."/>
            <person name="Shownkeen R."/>
            <person name="Skuce C.D."/>
            <person name="Smith M."/>
            <person name="Standring L."/>
            <person name="Sycamore N."/>
            <person name="Tester J."/>
            <person name="Thorpe A."/>
            <person name="Torcasso W."/>
            <person name="Tracey A."/>
            <person name="Tromans A."/>
            <person name="Tsolas J."/>
            <person name="Wall M."/>
            <person name="Walsh J."/>
            <person name="Wang H."/>
            <person name="Weinstock K."/>
            <person name="West A.P."/>
            <person name="Willey D.L."/>
            <person name="Whitehead S.L."/>
            <person name="Wilming L."/>
            <person name="Wray P.W."/>
            <person name="Young L."/>
            <person name="Chen Y."/>
            <person name="Lovering R.C."/>
            <person name="Moschonas N.K."/>
            <person name="Siebert R."/>
            <person name="Fechtel K."/>
            <person name="Bentley D."/>
            <person name="Durbin R.M."/>
            <person name="Hubbard T."/>
            <person name="Doucette-Stamm L."/>
            <person name="Beck S."/>
            <person name="Smith D.R."/>
            <person name="Rogers J."/>
        </authorList>
    </citation>
    <scope>NUCLEOTIDE SEQUENCE [LARGE SCALE GENOMIC DNA]</scope>
</reference>
<reference key="4">
    <citation type="submission" date="2005-09" db="EMBL/GenBank/DDBJ databases">
        <authorList>
            <person name="Mural R.J."/>
            <person name="Istrail S."/>
            <person name="Sutton G.G."/>
            <person name="Florea L."/>
            <person name="Halpern A.L."/>
            <person name="Mobarry C.M."/>
            <person name="Lippert R."/>
            <person name="Walenz B."/>
            <person name="Shatkay H."/>
            <person name="Dew I."/>
            <person name="Miller J.R."/>
            <person name="Flanigan M.J."/>
            <person name="Edwards N.J."/>
            <person name="Bolanos R."/>
            <person name="Fasulo D."/>
            <person name="Halldorsson B.V."/>
            <person name="Hannenhalli S."/>
            <person name="Turner R."/>
            <person name="Yooseph S."/>
            <person name="Lu F."/>
            <person name="Nusskern D.R."/>
            <person name="Shue B.C."/>
            <person name="Zheng X.H."/>
            <person name="Zhong F."/>
            <person name="Delcher A.L."/>
            <person name="Huson D.H."/>
            <person name="Kravitz S.A."/>
            <person name="Mouchard L."/>
            <person name="Reinert K."/>
            <person name="Remington K.A."/>
            <person name="Clark A.G."/>
            <person name="Waterman M.S."/>
            <person name="Eichler E.E."/>
            <person name="Adams M.D."/>
            <person name="Hunkapiller M.W."/>
            <person name="Myers E.W."/>
            <person name="Venter J.C."/>
        </authorList>
    </citation>
    <scope>NUCLEOTIDE SEQUENCE [LARGE SCALE GENOMIC DNA]</scope>
    <scope>VARIANT ALA-320</scope>
</reference>
<reference key="5">
    <citation type="journal article" date="2004" name="Genome Res.">
        <title>The status, quality, and expansion of the NIH full-length cDNA project: the Mammalian Gene Collection (MGC).</title>
        <authorList>
            <consortium name="The MGC Project Team"/>
        </authorList>
    </citation>
    <scope>NUCLEOTIDE SEQUENCE [LARGE SCALE MRNA] (ISOFORM 1)</scope>
    <source>
        <tissue>Colon</tissue>
        <tissue>Testis</tissue>
    </source>
</reference>
<reference key="6">
    <citation type="journal article" date="2002" name="Biochem. J.">
        <title>Evidence that the tandem-pleckstrin-homology-domain-containing protein TAPP1 interacts with Ptd(3,4)P2 and the multi-PDZ-domain-containing protein MUPP1 in vivo.</title>
        <authorList>
            <person name="Kimber W.A."/>
            <person name="Trinkle-Mulcahy L."/>
            <person name="Cheung P.C.F."/>
            <person name="Deak M."/>
            <person name="Marsden L.J."/>
            <person name="Kieloch A."/>
            <person name="Watt S."/>
            <person name="Javier R.T."/>
            <person name="Gray A."/>
            <person name="Downes C.P."/>
            <person name="Lucocq J.M."/>
            <person name="Alessi D.R."/>
        </authorList>
    </citation>
    <scope>INTERACTION WITH MPDZ</scope>
    <scope>SUBCELLULAR LOCATION</scope>
</reference>
<reference key="7">
    <citation type="journal article" date="2002" name="Mol. Cell. Biol.">
        <title>TAPP1 and TAPP2 are targets of phosphatidylinositol 3-kinase signaling in B cells: sustained plasma membrane recruitment triggered by the B-cell antigen receptor.</title>
        <authorList>
            <person name="Marshall A.J."/>
            <person name="Krahn A.K."/>
            <person name="Ma K."/>
            <person name="Duronio V."/>
            <person name="Hou S."/>
        </authorList>
    </citation>
    <scope>SUBCELLULAR LOCATION</scope>
    <scope>TISSUE SPECIFICITY</scope>
</reference>
<reference key="8">
    <citation type="journal article" date="2003" name="Biochem. J.">
        <title>Interaction of the protein tyrosine phosphatase PTPL1 with the PtdIns(3,4)P2-binding adaptor protein TAPP1.</title>
        <authorList>
            <person name="Kimber W.A."/>
            <person name="Deak M."/>
            <person name="Prescott A.R."/>
            <person name="Alessi D.R."/>
        </authorList>
    </citation>
    <scope>INTERACTION WITH PTPN13</scope>
    <scope>FUNCTION</scope>
</reference>
<reference key="9">
    <citation type="journal article" date="2008" name="Proc. Natl. Acad. Sci. U.S.A.">
        <title>A quantitative atlas of mitotic phosphorylation.</title>
        <authorList>
            <person name="Dephoure N."/>
            <person name="Zhou C."/>
            <person name="Villen J."/>
            <person name="Beausoleil S.A."/>
            <person name="Bakalarski C.E."/>
            <person name="Elledge S.J."/>
            <person name="Gygi S.P."/>
        </authorList>
    </citation>
    <scope>PHOSPHORYLATION [LARGE SCALE ANALYSIS] AT SER-362</scope>
    <scope>IDENTIFICATION BY MASS SPECTROMETRY [LARGE SCALE ANALYSIS]</scope>
    <source>
        <tissue>Cervix carcinoma</tissue>
    </source>
</reference>
<reference key="10">
    <citation type="journal article" date="2009" name="Sci. Signal.">
        <title>Quantitative phosphoproteomic analysis of T cell receptor signaling reveals system-wide modulation of protein-protein interactions.</title>
        <authorList>
            <person name="Mayya V."/>
            <person name="Lundgren D.H."/>
            <person name="Hwang S.-I."/>
            <person name="Rezaul K."/>
            <person name="Wu L."/>
            <person name="Eng J.K."/>
            <person name="Rodionov V."/>
            <person name="Han D.K."/>
        </authorList>
    </citation>
    <scope>IDENTIFICATION BY MASS SPECTROMETRY [LARGE SCALE ANALYSIS]</scope>
    <source>
        <tissue>Leukemic T-cell</tissue>
    </source>
</reference>
<reference key="11">
    <citation type="journal article" date="2011" name="Sci. Signal.">
        <title>System-wide temporal characterization of the proteome and phosphoproteome of human embryonic stem cell differentiation.</title>
        <authorList>
            <person name="Rigbolt K.T."/>
            <person name="Prokhorova T.A."/>
            <person name="Akimov V."/>
            <person name="Henningsen J."/>
            <person name="Johansen P.T."/>
            <person name="Kratchmarova I."/>
            <person name="Kassem M."/>
            <person name="Mann M."/>
            <person name="Olsen J.V."/>
            <person name="Blagoev B."/>
        </authorList>
    </citation>
    <scope>IDENTIFICATION BY MASS SPECTROMETRY [LARGE SCALE ANALYSIS]</scope>
</reference>
<reference key="12">
    <citation type="journal article" date="2013" name="J. Proteome Res.">
        <title>Toward a comprehensive characterization of a human cancer cell phosphoproteome.</title>
        <authorList>
            <person name="Zhou H."/>
            <person name="Di Palma S."/>
            <person name="Preisinger C."/>
            <person name="Peng M."/>
            <person name="Polat A.N."/>
            <person name="Heck A.J."/>
            <person name="Mohammed S."/>
        </authorList>
    </citation>
    <scope>PHOSPHORYLATION [LARGE SCALE ANALYSIS] AT SER-332</scope>
    <scope>IDENTIFICATION BY MASS SPECTROMETRY [LARGE SCALE ANALYSIS]</scope>
    <source>
        <tissue>Cervix carcinoma</tissue>
    </source>
</reference>
<reference key="13">
    <citation type="journal article" date="2001" name="Biochem. J.">
        <title>Crystal structure of the phosphatidylinositol 3,4-bisphosphate-binding pleckstrin homology (PH) domain of tandem PH-domain-containing protein 1 (TAPP1): molecular basis of lipid specificity.</title>
        <authorList>
            <person name="Thomas C.C."/>
            <person name="Dowler S.J."/>
            <person name="Deak M."/>
            <person name="Alessi D.R."/>
            <person name="van Aalten D.M.F."/>
        </authorList>
    </citation>
    <scope>X-RAY CRYSTALLOGRAPHY (1.4 ANGSTROMS) OF 190-292</scope>
    <scope>FUNCTION</scope>
    <scope>MUTAGENESIS OF ALA-203; VAL-204; MET-205 AND ASN-207</scope>
</reference>
<feature type="chain" id="PRO_0000053873" description="Pleckstrin homology domain-containing family A member 1">
    <location>
        <begin position="1"/>
        <end position="404"/>
    </location>
</feature>
<feature type="domain" description="PH 1" evidence="1">
    <location>
        <begin position="7"/>
        <end position="112"/>
    </location>
</feature>
<feature type="domain" description="PH 2" evidence="1">
    <location>
        <begin position="191"/>
        <end position="289"/>
    </location>
</feature>
<feature type="region of interest" description="Disordered" evidence="2">
    <location>
        <begin position="291"/>
        <end position="332"/>
    </location>
</feature>
<feature type="region of interest" description="Disordered" evidence="2">
    <location>
        <begin position="355"/>
        <end position="404"/>
    </location>
</feature>
<feature type="compositionally biased region" description="Low complexity" evidence="2">
    <location>
        <begin position="316"/>
        <end position="332"/>
    </location>
</feature>
<feature type="modified residue" description="Phosphoserine" evidence="11">
    <location>
        <position position="332"/>
    </location>
</feature>
<feature type="modified residue" description="Phosphoserine" evidence="10">
    <location>
        <position position="362"/>
    </location>
</feature>
<feature type="splice variant" id="VSP_043091" description="In isoform 2." evidence="9">
    <original>EHPPGPSESKHAFRPTNAATATSHSTASRSNSLVSTFTMEKRGFYESLAKVKPGNFKVQTVSPREPASKVTEQALLRPQSKNGPQEKDCDLVDLDDASLPVSDV</original>
    <variation>MRQARRLSNPCIQRYTSRAGECSTYVGSHANVPS</variation>
    <location>
        <begin position="301"/>
        <end position="404"/>
    </location>
</feature>
<feature type="sequence variant" id="VAR_024562" description="In dbSNP:rs1045216." evidence="3 8">
    <original>T</original>
    <variation>A</variation>
    <location>
        <position position="320"/>
    </location>
</feature>
<feature type="mutagenesis site" description="No effect on phosphatidylinositide binding." evidence="3">
    <original>R</original>
    <variation>L</variation>
    <location>
        <position position="28"/>
    </location>
</feature>
<feature type="mutagenesis site" description="Abolishes phosphatidylinositide binding.">
    <original>AVM</original>
    <variation>GGG</variation>
    <location>
        <begin position="203"/>
        <end position="205"/>
    </location>
</feature>
<feature type="mutagenesis site" description="Binds both PtdIns3,4P2 and PtdIns3,4,5P3.">
    <original>AVM</original>
    <variation>GLV</variation>
    <location>
        <begin position="203"/>
        <end position="205"/>
    </location>
</feature>
<feature type="mutagenesis site" description="Binds both PtdIns3,4P2 and PtdIns3,4,5P3.">
    <original>AV</original>
    <variation>GG</variation>
    <location>
        <begin position="203"/>
        <end position="204"/>
    </location>
</feature>
<feature type="mutagenesis site" description="Binds both PtdIns3,4P2 and PtdIns3,4,5P3." evidence="4">
    <original>A</original>
    <variation>G</variation>
    <location>
        <position position="203"/>
    </location>
</feature>
<feature type="mutagenesis site" description="No effect." evidence="4">
    <original>V</original>
    <variation>L</variation>
    <location>
        <position position="204"/>
    </location>
</feature>
<feature type="mutagenesis site" description="No effect." evidence="4">
    <original>M</original>
    <variation>V</variation>
    <location>
        <position position="205"/>
    </location>
</feature>
<feature type="mutagenesis site" description="No effect." evidence="4">
    <original>N</original>
    <variation>T</variation>
    <location>
        <position position="207"/>
    </location>
</feature>
<feature type="mutagenesis site" description="Abolishes phosphatidylinositide binding." evidence="3">
    <original>R</original>
    <variation>L</variation>
    <location>
        <position position="211"/>
    </location>
</feature>
<feature type="strand" evidence="12">
    <location>
        <begin position="193"/>
        <end position="201"/>
    </location>
</feature>
<feature type="turn" evidence="12">
    <location>
        <begin position="203"/>
        <end position="205"/>
    </location>
</feature>
<feature type="strand" evidence="12">
    <location>
        <begin position="208"/>
        <end position="215"/>
    </location>
</feature>
<feature type="strand" evidence="12">
    <location>
        <begin position="217"/>
        <end position="225"/>
    </location>
</feature>
<feature type="strand" evidence="12">
    <location>
        <begin position="232"/>
        <end position="236"/>
    </location>
</feature>
<feature type="helix" evidence="12">
    <location>
        <begin position="237"/>
        <end position="239"/>
    </location>
</feature>
<feature type="strand" evidence="12">
    <location>
        <begin position="242"/>
        <end position="245"/>
    </location>
</feature>
<feature type="helix" evidence="12">
    <location>
        <begin position="249"/>
        <end position="252"/>
    </location>
</feature>
<feature type="strand" evidence="12">
    <location>
        <begin position="255"/>
        <end position="261"/>
    </location>
</feature>
<feature type="strand" evidence="12">
    <location>
        <begin position="266"/>
        <end position="270"/>
    </location>
</feature>
<feature type="helix" evidence="12">
    <location>
        <begin position="274"/>
        <end position="290"/>
    </location>
</feature>
<name>PKHA1_HUMAN</name>
<keyword id="KW-0002">3D-structure</keyword>
<keyword id="KW-0025">Alternative splicing</keyword>
<keyword id="KW-1003">Cell membrane</keyword>
<keyword id="KW-0963">Cytoplasm</keyword>
<keyword id="KW-0446">Lipid-binding</keyword>
<keyword id="KW-0472">Membrane</keyword>
<keyword id="KW-0539">Nucleus</keyword>
<keyword id="KW-0597">Phosphoprotein</keyword>
<keyword id="KW-1267">Proteomics identification</keyword>
<keyword id="KW-1185">Reference proteome</keyword>
<keyword id="KW-0677">Repeat</keyword>